<proteinExistence type="inferred from homology"/>
<evidence type="ECO:0000255" key="1">
    <source>
        <dbReference type="HAMAP-Rule" id="MF_01522"/>
    </source>
</evidence>
<keyword id="KW-0997">Cell inner membrane</keyword>
<keyword id="KW-1003">Cell membrane</keyword>
<keyword id="KW-0406">Ion transport</keyword>
<keyword id="KW-0472">Membrane</keyword>
<keyword id="KW-0630">Potassium</keyword>
<keyword id="KW-0633">Potassium transport</keyword>
<keyword id="KW-0769">Symport</keyword>
<keyword id="KW-0812">Transmembrane</keyword>
<keyword id="KW-1133">Transmembrane helix</keyword>
<keyword id="KW-0813">Transport</keyword>
<feature type="chain" id="PRO_1000190278" description="Low affinity potassium transport system protein Kup">
    <location>
        <begin position="1"/>
        <end position="622"/>
    </location>
</feature>
<feature type="transmembrane region" description="Helical" evidence="1">
    <location>
        <begin position="9"/>
        <end position="29"/>
    </location>
</feature>
<feature type="transmembrane region" description="Helical" evidence="1">
    <location>
        <begin position="49"/>
        <end position="69"/>
    </location>
</feature>
<feature type="transmembrane region" description="Helical" evidence="1">
    <location>
        <begin position="103"/>
        <end position="123"/>
    </location>
</feature>
<feature type="transmembrane region" description="Helical" evidence="1">
    <location>
        <begin position="137"/>
        <end position="157"/>
    </location>
</feature>
<feature type="transmembrane region" description="Helical" evidence="1">
    <location>
        <begin position="165"/>
        <end position="185"/>
    </location>
</feature>
<feature type="transmembrane region" description="Helical" evidence="1">
    <location>
        <begin position="213"/>
        <end position="233"/>
    </location>
</feature>
<feature type="transmembrane region" description="Helical" evidence="1">
    <location>
        <begin position="247"/>
        <end position="267"/>
    </location>
</feature>
<feature type="transmembrane region" description="Helical" evidence="1">
    <location>
        <begin position="276"/>
        <end position="296"/>
    </location>
</feature>
<feature type="transmembrane region" description="Helical" evidence="1">
    <location>
        <begin position="337"/>
        <end position="357"/>
    </location>
</feature>
<feature type="transmembrane region" description="Helical" evidence="1">
    <location>
        <begin position="363"/>
        <end position="383"/>
    </location>
</feature>
<feature type="transmembrane region" description="Helical" evidence="1">
    <location>
        <begin position="396"/>
        <end position="416"/>
    </location>
</feature>
<feature type="transmembrane region" description="Helical" evidence="1">
    <location>
        <begin position="419"/>
        <end position="439"/>
    </location>
</feature>
<name>KUP_SALEP</name>
<dbReference type="EMBL" id="AM933172">
    <property type="protein sequence ID" value="CAR35270.1"/>
    <property type="molecule type" value="Genomic_DNA"/>
</dbReference>
<dbReference type="RefSeq" id="WP_000102338.1">
    <property type="nucleotide sequence ID" value="NC_011294.1"/>
</dbReference>
<dbReference type="KEGG" id="set:SEN3694"/>
<dbReference type="HOGENOM" id="CLU_008142_4_2_6"/>
<dbReference type="Proteomes" id="UP000000613">
    <property type="component" value="Chromosome"/>
</dbReference>
<dbReference type="GO" id="GO:0005886">
    <property type="term" value="C:plasma membrane"/>
    <property type="evidence" value="ECO:0007669"/>
    <property type="project" value="UniProtKB-SubCell"/>
</dbReference>
<dbReference type="GO" id="GO:0015079">
    <property type="term" value="F:potassium ion transmembrane transporter activity"/>
    <property type="evidence" value="ECO:0007669"/>
    <property type="project" value="UniProtKB-UniRule"/>
</dbReference>
<dbReference type="GO" id="GO:0015293">
    <property type="term" value="F:symporter activity"/>
    <property type="evidence" value="ECO:0007669"/>
    <property type="project" value="UniProtKB-UniRule"/>
</dbReference>
<dbReference type="HAMAP" id="MF_01522">
    <property type="entry name" value="Kup"/>
    <property type="match status" value="1"/>
</dbReference>
<dbReference type="InterPro" id="IPR003855">
    <property type="entry name" value="K+_transporter"/>
</dbReference>
<dbReference type="InterPro" id="IPR053952">
    <property type="entry name" value="K_trans_C"/>
</dbReference>
<dbReference type="InterPro" id="IPR053951">
    <property type="entry name" value="K_trans_N"/>
</dbReference>
<dbReference type="InterPro" id="IPR023051">
    <property type="entry name" value="Kup"/>
</dbReference>
<dbReference type="NCBIfam" id="TIGR00794">
    <property type="entry name" value="kup"/>
    <property type="match status" value="1"/>
</dbReference>
<dbReference type="NCBIfam" id="NF008015">
    <property type="entry name" value="PRK10745.1"/>
    <property type="match status" value="1"/>
</dbReference>
<dbReference type="PANTHER" id="PTHR30540:SF79">
    <property type="entry name" value="LOW AFFINITY POTASSIUM TRANSPORT SYSTEM PROTEIN KUP"/>
    <property type="match status" value="1"/>
</dbReference>
<dbReference type="PANTHER" id="PTHR30540">
    <property type="entry name" value="OSMOTIC STRESS POTASSIUM TRANSPORTER"/>
    <property type="match status" value="1"/>
</dbReference>
<dbReference type="Pfam" id="PF02705">
    <property type="entry name" value="K_trans"/>
    <property type="match status" value="1"/>
</dbReference>
<dbReference type="Pfam" id="PF22776">
    <property type="entry name" value="K_trans_C"/>
    <property type="match status" value="1"/>
</dbReference>
<reference key="1">
    <citation type="journal article" date="2008" name="Genome Res.">
        <title>Comparative genome analysis of Salmonella enteritidis PT4 and Salmonella gallinarum 287/91 provides insights into evolutionary and host adaptation pathways.</title>
        <authorList>
            <person name="Thomson N.R."/>
            <person name="Clayton D.J."/>
            <person name="Windhorst D."/>
            <person name="Vernikos G."/>
            <person name="Davidson S."/>
            <person name="Churcher C."/>
            <person name="Quail M.A."/>
            <person name="Stevens M."/>
            <person name="Jones M.A."/>
            <person name="Watson M."/>
            <person name="Barron A."/>
            <person name="Layton A."/>
            <person name="Pickard D."/>
            <person name="Kingsley R.A."/>
            <person name="Bignell A."/>
            <person name="Clark L."/>
            <person name="Harris B."/>
            <person name="Ormond D."/>
            <person name="Abdellah Z."/>
            <person name="Brooks K."/>
            <person name="Cherevach I."/>
            <person name="Chillingworth T."/>
            <person name="Woodward J."/>
            <person name="Norberczak H."/>
            <person name="Lord A."/>
            <person name="Arrowsmith C."/>
            <person name="Jagels K."/>
            <person name="Moule S."/>
            <person name="Mungall K."/>
            <person name="Saunders M."/>
            <person name="Whitehead S."/>
            <person name="Chabalgoity J.A."/>
            <person name="Maskell D."/>
            <person name="Humphreys T."/>
            <person name="Roberts M."/>
            <person name="Barrow P.A."/>
            <person name="Dougan G."/>
            <person name="Parkhill J."/>
        </authorList>
    </citation>
    <scope>NUCLEOTIDE SEQUENCE [LARGE SCALE GENOMIC DNA]</scope>
    <source>
        <strain>P125109</strain>
    </source>
</reference>
<gene>
    <name evidence="1" type="primary">kup</name>
    <name type="ordered locus">SEN3694</name>
</gene>
<organism>
    <name type="scientific">Salmonella enteritidis PT4 (strain P125109)</name>
    <dbReference type="NCBI Taxonomy" id="550537"/>
    <lineage>
        <taxon>Bacteria</taxon>
        <taxon>Pseudomonadati</taxon>
        <taxon>Pseudomonadota</taxon>
        <taxon>Gammaproteobacteria</taxon>
        <taxon>Enterobacterales</taxon>
        <taxon>Enterobacteriaceae</taxon>
        <taxon>Salmonella</taxon>
    </lineage>
</organism>
<protein>
    <recommendedName>
        <fullName evidence="1">Low affinity potassium transport system protein Kup</fullName>
    </recommendedName>
    <alternativeName>
        <fullName evidence="1">Kup system potassium uptake protein</fullName>
    </alternativeName>
</protein>
<comment type="function">
    <text evidence="1">Responsible for the low-affinity transport of potassium into the cell. Likely operates as a K(+):H(+) symporter.</text>
</comment>
<comment type="catalytic activity">
    <reaction evidence="1">
        <text>K(+)(in) + H(+)(in) = K(+)(out) + H(+)(out)</text>
        <dbReference type="Rhea" id="RHEA:28490"/>
        <dbReference type="ChEBI" id="CHEBI:15378"/>
        <dbReference type="ChEBI" id="CHEBI:29103"/>
    </reaction>
    <physiologicalReaction direction="right-to-left" evidence="1">
        <dbReference type="Rhea" id="RHEA:28492"/>
    </physiologicalReaction>
</comment>
<comment type="subcellular location">
    <subcellularLocation>
        <location evidence="1">Cell inner membrane</location>
        <topology evidence="1">Multi-pass membrane protein</topology>
    </subcellularLocation>
</comment>
<comment type="similarity">
    <text evidence="1">Belongs to the HAK/KUP transporter (TC 2.A.72) family.</text>
</comment>
<sequence length="622" mass="69301">MSTDNKQSLPAITLAAIGVVYGDIGTSPLYTLRECLSGQFGFGVERDAVFGFLSLIFWLLIFVVSIKYLTFVMRADNAGEGGILTLMSLAGRNTSARTTSMLVIMGLIGGSFFYGEVVITPAISVMSAIEGLEIVAPQLDTWIVPLSIIVLTLLFMIQKHGTGMVGKLFAPIMLTWFLILAVLGLRSIIANPEVLHALNPVWAVRFFLEYKTVSFIALGAVVLSITGVEALYADMGHFGKFPIRLAWFTVVLPSLVLNYFGQGALLLKHPEAIKNPFFLLAPDWALIPLLILAALATVIASQAVISGVFSLTRQAVRLGYLSPMRIIHTSEMESGQIYIPFVNWLLYFAVVVVIVSFEHSSNLAAAYGIAVTGTMVLTSILSTTVARKNWHWNKYFVALILIAFLCVDIPLFSANLDKLLSGGWLPLSLGLIMFTIMTTWKSERFRLLRRMHEHGNSLEAMIASLEKSPPVRVPGTAVYMSRALSVIPFALLHNLKHNKVLHERVILLTLRTEDAPYVHNVRRVQIEQLSPTFWRVVASYGWRETPNVEEVFHRCGLEGLSCRMMETSFFMSHESLIVGKRPWYLRLRGKLYLLLQRNALRAPDQFEIPPNRVIELGTQVEI</sequence>
<accession>B5QVE7</accession>